<reference key="1">
    <citation type="journal article" date="2005" name="Proc. Natl. Acad. Sci. U.S.A.">
        <title>The complete genome sequence of Mycobacterium avium subspecies paratuberculosis.</title>
        <authorList>
            <person name="Li L."/>
            <person name="Bannantine J.P."/>
            <person name="Zhang Q."/>
            <person name="Amonsin A."/>
            <person name="May B.J."/>
            <person name="Alt D."/>
            <person name="Banerji N."/>
            <person name="Kanjilal S."/>
            <person name="Kapur V."/>
        </authorList>
    </citation>
    <scope>NUCLEOTIDE SEQUENCE [LARGE SCALE GENOMIC DNA]</scope>
    <source>
        <strain>ATCC BAA-968 / K-10</strain>
    </source>
</reference>
<evidence type="ECO:0000255" key="1">
    <source>
        <dbReference type="HAMAP-Rule" id="MF_02004"/>
    </source>
</evidence>
<comment type="function">
    <text evidence="1">Catalyzes the attachment of valine to tRNA(Val). As ValRS can inadvertently accommodate and process structurally similar amino acids such as threonine, to avoid such errors, it has a 'posttransfer' editing activity that hydrolyzes mischarged Thr-tRNA(Val) in a tRNA-dependent manner.</text>
</comment>
<comment type="catalytic activity">
    <reaction evidence="1">
        <text>tRNA(Val) + L-valine + ATP = L-valyl-tRNA(Val) + AMP + diphosphate</text>
        <dbReference type="Rhea" id="RHEA:10704"/>
        <dbReference type="Rhea" id="RHEA-COMP:9672"/>
        <dbReference type="Rhea" id="RHEA-COMP:9708"/>
        <dbReference type="ChEBI" id="CHEBI:30616"/>
        <dbReference type="ChEBI" id="CHEBI:33019"/>
        <dbReference type="ChEBI" id="CHEBI:57762"/>
        <dbReference type="ChEBI" id="CHEBI:78442"/>
        <dbReference type="ChEBI" id="CHEBI:78537"/>
        <dbReference type="ChEBI" id="CHEBI:456215"/>
        <dbReference type="EC" id="6.1.1.9"/>
    </reaction>
</comment>
<comment type="subunit">
    <text evidence="1">Monomer.</text>
</comment>
<comment type="subcellular location">
    <subcellularLocation>
        <location evidence="1">Cytoplasm</location>
    </subcellularLocation>
</comment>
<comment type="domain">
    <text evidence="1">ValRS has two distinct active sites: one for aminoacylation and one for editing. The misactivated threonine is translocated from the active site to the editing site.</text>
</comment>
<comment type="domain">
    <text evidence="1">The C-terminal coiled-coil domain is crucial for aminoacylation activity.</text>
</comment>
<comment type="similarity">
    <text evidence="1">Belongs to the class-I aminoacyl-tRNA synthetase family. ValS type 1 subfamily.</text>
</comment>
<sequence>MTASRSPATDLPKSWDPPAAEYAIYRQWVDAGYFTANPASDKPGYSIVLPPPNVTGSLHMGHALEHTMMDALTRRKRMQGYEVLWQPGMDHAGIATQSVVEKQLAVDGKTKEDFGRELFIEKVWDWKRESGGAIGGQMRRLGDGVDWSRDRFTMDEGLSRAVRTIFKRLYDAGLIYRAERLVNWSPVLQTALSDIEVNYEEVEGELVSFRYGSLDDSGPHIVVATTRVETMLGDTAIAVHPDDERYRHLVGSSLPHPFVDRQLLIVADEHVDPEFGTGAVKVTPAHDPNDFEIGLRHQLPMISIMDTRGRIADTGTQFDGMDRFAARVAVREALAAQGRIVEEKRPYLHSVGHSERSGEPIEPRLSLQWWVRVESLAKAAGDAVRNGDTVIHPTSMEPRWFAWVDDMHDWCVSRQLWWGHRIPIWYGPNGEQRCVGPDETPPEGWEQDPDVLDTWFSSALWPFSTLGWPEKTPELEKFYPTSVLVTGYDILFFWVARMMMFGTFVGDDDAITLDGRRGPQVPFTDVFLHGLIRDESGRKMSKSKGNVIDPLDWVDMFGADALRFTLARGASPGGDLAIGEDHVRASRNFCTKLFNATRYALLNGAQLAELPPLDELTDADRWILGRLEEVRAEVDSAFDNYEFSRACESLYHFAWDEFCDWYVELAKTQLAEGITHTTAVLATTLDTLLRLLHPVIPFITEALWQALTGNESLVIADWPRSSGIDLDQVATQRITDMQKLVTEVRRFRSDQGLADRQKVPARLAGVTESDLDTQVSAVTSLAWLTDAGPDFRPSASVEVRLRGGTVVVELDTSGSIDVAAERRRLEKDLAAAHKELASTTAKLANEDFLAKAPPHVVDKIRDRQRLAQEESERINARLAVLQ</sequence>
<protein>
    <recommendedName>
        <fullName evidence="1">Valine--tRNA ligase</fullName>
        <ecNumber evidence="1">6.1.1.9</ecNumber>
    </recommendedName>
    <alternativeName>
        <fullName evidence="1">Valyl-tRNA synthetase</fullName>
        <shortName evidence="1">ValRS</shortName>
    </alternativeName>
</protein>
<organism>
    <name type="scientific">Mycolicibacterium paratuberculosis (strain ATCC BAA-968 / K-10)</name>
    <name type="common">Mycobacterium paratuberculosis</name>
    <dbReference type="NCBI Taxonomy" id="262316"/>
    <lineage>
        <taxon>Bacteria</taxon>
        <taxon>Bacillati</taxon>
        <taxon>Actinomycetota</taxon>
        <taxon>Actinomycetes</taxon>
        <taxon>Mycobacteriales</taxon>
        <taxon>Mycobacteriaceae</taxon>
        <taxon>Mycobacterium</taxon>
        <taxon>Mycobacterium avium complex (MAC)</taxon>
    </lineage>
</organism>
<accession>Q73XN8</accession>
<gene>
    <name evidence="1" type="primary">valS</name>
    <name type="ordered locus">MAP_2271c</name>
</gene>
<keyword id="KW-0030">Aminoacyl-tRNA synthetase</keyword>
<keyword id="KW-0067">ATP-binding</keyword>
<keyword id="KW-0175">Coiled coil</keyword>
<keyword id="KW-0963">Cytoplasm</keyword>
<keyword id="KW-0436">Ligase</keyword>
<keyword id="KW-0547">Nucleotide-binding</keyword>
<keyword id="KW-0648">Protein biosynthesis</keyword>
<keyword id="KW-1185">Reference proteome</keyword>
<name>SYV_MYCPA</name>
<feature type="chain" id="PRO_0000224506" description="Valine--tRNA ligase">
    <location>
        <begin position="1"/>
        <end position="882"/>
    </location>
</feature>
<feature type="coiled-coil region" evidence="1">
    <location>
        <begin position="816"/>
        <end position="882"/>
    </location>
</feature>
<feature type="short sequence motif" description="'HIGH' region">
    <location>
        <begin position="52"/>
        <end position="62"/>
    </location>
</feature>
<feature type="short sequence motif" description="'KMSKS' region">
    <location>
        <begin position="539"/>
        <end position="543"/>
    </location>
</feature>
<feature type="binding site" evidence="1">
    <location>
        <position position="542"/>
    </location>
    <ligand>
        <name>ATP</name>
        <dbReference type="ChEBI" id="CHEBI:30616"/>
    </ligand>
</feature>
<dbReference type="EC" id="6.1.1.9" evidence="1"/>
<dbReference type="EMBL" id="AE016958">
    <property type="protein sequence ID" value="AAS04588.1"/>
    <property type="molecule type" value="Genomic_DNA"/>
</dbReference>
<dbReference type="RefSeq" id="WP_003878405.1">
    <property type="nucleotide sequence ID" value="NZ_CP106873.1"/>
</dbReference>
<dbReference type="SMR" id="Q73XN8"/>
<dbReference type="STRING" id="262316.MAP_2271c"/>
<dbReference type="KEGG" id="mpa:MAP_2271c"/>
<dbReference type="PATRIC" id="fig|262316.17.peg.2415"/>
<dbReference type="eggNOG" id="COG0525">
    <property type="taxonomic scope" value="Bacteria"/>
</dbReference>
<dbReference type="HOGENOM" id="CLU_001493_0_2_11"/>
<dbReference type="Proteomes" id="UP000000580">
    <property type="component" value="Chromosome"/>
</dbReference>
<dbReference type="GO" id="GO:0005829">
    <property type="term" value="C:cytosol"/>
    <property type="evidence" value="ECO:0007669"/>
    <property type="project" value="TreeGrafter"/>
</dbReference>
<dbReference type="GO" id="GO:0002161">
    <property type="term" value="F:aminoacyl-tRNA deacylase activity"/>
    <property type="evidence" value="ECO:0007669"/>
    <property type="project" value="InterPro"/>
</dbReference>
<dbReference type="GO" id="GO:0005524">
    <property type="term" value="F:ATP binding"/>
    <property type="evidence" value="ECO:0007669"/>
    <property type="project" value="UniProtKB-UniRule"/>
</dbReference>
<dbReference type="GO" id="GO:0004832">
    <property type="term" value="F:valine-tRNA ligase activity"/>
    <property type="evidence" value="ECO:0007669"/>
    <property type="project" value="UniProtKB-UniRule"/>
</dbReference>
<dbReference type="GO" id="GO:0006438">
    <property type="term" value="P:valyl-tRNA aminoacylation"/>
    <property type="evidence" value="ECO:0007669"/>
    <property type="project" value="UniProtKB-UniRule"/>
</dbReference>
<dbReference type="CDD" id="cd07962">
    <property type="entry name" value="Anticodon_Ia_Val"/>
    <property type="match status" value="1"/>
</dbReference>
<dbReference type="CDD" id="cd00817">
    <property type="entry name" value="ValRS_core"/>
    <property type="match status" value="1"/>
</dbReference>
<dbReference type="FunFam" id="1.10.287.380:FF:000001">
    <property type="entry name" value="Valine--tRNA ligase"/>
    <property type="match status" value="1"/>
</dbReference>
<dbReference type="FunFam" id="1.10.730.10:FF:000027">
    <property type="entry name" value="Valine--tRNA ligase"/>
    <property type="match status" value="1"/>
</dbReference>
<dbReference type="FunFam" id="3.40.50.620:FF:000098">
    <property type="entry name" value="Valine--tRNA ligase"/>
    <property type="match status" value="1"/>
</dbReference>
<dbReference type="FunFam" id="3.40.50.620:FF:000129">
    <property type="entry name" value="Valine--tRNA ligase"/>
    <property type="match status" value="1"/>
</dbReference>
<dbReference type="Gene3D" id="3.40.50.620">
    <property type="entry name" value="HUPs"/>
    <property type="match status" value="2"/>
</dbReference>
<dbReference type="Gene3D" id="1.10.730.10">
    <property type="entry name" value="Isoleucyl-tRNA Synthetase, Domain 1"/>
    <property type="match status" value="1"/>
</dbReference>
<dbReference type="Gene3D" id="1.10.287.380">
    <property type="entry name" value="Valyl-tRNA synthetase, C-terminal domain"/>
    <property type="match status" value="1"/>
</dbReference>
<dbReference type="HAMAP" id="MF_02004">
    <property type="entry name" value="Val_tRNA_synth_type1"/>
    <property type="match status" value="1"/>
</dbReference>
<dbReference type="InterPro" id="IPR001412">
    <property type="entry name" value="aa-tRNA-synth_I_CS"/>
</dbReference>
<dbReference type="InterPro" id="IPR002300">
    <property type="entry name" value="aa-tRNA-synth_Ia"/>
</dbReference>
<dbReference type="InterPro" id="IPR033705">
    <property type="entry name" value="Anticodon_Ia_Val"/>
</dbReference>
<dbReference type="InterPro" id="IPR013155">
    <property type="entry name" value="M/V/L/I-tRNA-synth_anticd-bd"/>
</dbReference>
<dbReference type="InterPro" id="IPR014729">
    <property type="entry name" value="Rossmann-like_a/b/a_fold"/>
</dbReference>
<dbReference type="InterPro" id="IPR010978">
    <property type="entry name" value="tRNA-bd_arm"/>
</dbReference>
<dbReference type="InterPro" id="IPR009080">
    <property type="entry name" value="tRNAsynth_Ia_anticodon-bd"/>
</dbReference>
<dbReference type="InterPro" id="IPR037118">
    <property type="entry name" value="Val-tRNA_synth_C_sf"/>
</dbReference>
<dbReference type="InterPro" id="IPR019499">
    <property type="entry name" value="Val-tRNA_synth_tRNA-bd"/>
</dbReference>
<dbReference type="InterPro" id="IPR009008">
    <property type="entry name" value="Val/Leu/Ile-tRNA-synth_edit"/>
</dbReference>
<dbReference type="InterPro" id="IPR002303">
    <property type="entry name" value="Valyl-tRNA_ligase"/>
</dbReference>
<dbReference type="NCBIfam" id="NF004349">
    <property type="entry name" value="PRK05729.1"/>
    <property type="match status" value="1"/>
</dbReference>
<dbReference type="NCBIfam" id="TIGR00422">
    <property type="entry name" value="valS"/>
    <property type="match status" value="1"/>
</dbReference>
<dbReference type="PANTHER" id="PTHR11946:SF93">
    <property type="entry name" value="VALINE--TRNA LIGASE, CHLOROPLASTIC_MITOCHONDRIAL 2"/>
    <property type="match status" value="1"/>
</dbReference>
<dbReference type="PANTHER" id="PTHR11946">
    <property type="entry name" value="VALYL-TRNA SYNTHETASES"/>
    <property type="match status" value="1"/>
</dbReference>
<dbReference type="Pfam" id="PF08264">
    <property type="entry name" value="Anticodon_1"/>
    <property type="match status" value="1"/>
</dbReference>
<dbReference type="Pfam" id="PF00133">
    <property type="entry name" value="tRNA-synt_1"/>
    <property type="match status" value="2"/>
</dbReference>
<dbReference type="Pfam" id="PF10458">
    <property type="entry name" value="Val_tRNA-synt_C"/>
    <property type="match status" value="1"/>
</dbReference>
<dbReference type="PRINTS" id="PR00986">
    <property type="entry name" value="TRNASYNTHVAL"/>
</dbReference>
<dbReference type="SUPFAM" id="SSF47323">
    <property type="entry name" value="Anticodon-binding domain of a subclass of class I aminoacyl-tRNA synthetases"/>
    <property type="match status" value="1"/>
</dbReference>
<dbReference type="SUPFAM" id="SSF52374">
    <property type="entry name" value="Nucleotidylyl transferase"/>
    <property type="match status" value="1"/>
</dbReference>
<dbReference type="SUPFAM" id="SSF46589">
    <property type="entry name" value="tRNA-binding arm"/>
    <property type="match status" value="1"/>
</dbReference>
<dbReference type="SUPFAM" id="SSF50677">
    <property type="entry name" value="ValRS/IleRS/LeuRS editing domain"/>
    <property type="match status" value="1"/>
</dbReference>
<dbReference type="PROSITE" id="PS00178">
    <property type="entry name" value="AA_TRNA_LIGASE_I"/>
    <property type="match status" value="1"/>
</dbReference>
<proteinExistence type="inferred from homology"/>